<accession>P26085</accession>
<evidence type="ECO:0000255" key="1">
    <source>
        <dbReference type="HAMAP-Rule" id="MF_04070"/>
    </source>
</evidence>
<evidence type="ECO:0000256" key="2">
    <source>
        <dbReference type="SAM" id="MobiDB-lite"/>
    </source>
</evidence>
<dbReference type="EMBL" id="M63765">
    <property type="protein sequence ID" value="AAA52264.1"/>
    <property type="molecule type" value="Genomic_RNA"/>
</dbReference>
<dbReference type="SMR" id="P26085"/>
<dbReference type="GO" id="GO:0019029">
    <property type="term" value="C:helical viral capsid"/>
    <property type="evidence" value="ECO:0007669"/>
    <property type="project" value="UniProtKB-UniRule"/>
</dbReference>
<dbReference type="GO" id="GO:0043657">
    <property type="term" value="C:host cell"/>
    <property type="evidence" value="ECO:0007669"/>
    <property type="project" value="GOC"/>
</dbReference>
<dbReference type="GO" id="GO:0042025">
    <property type="term" value="C:host cell nucleus"/>
    <property type="evidence" value="ECO:0007669"/>
    <property type="project" value="UniProtKB-SubCell"/>
</dbReference>
<dbReference type="GO" id="GO:1990904">
    <property type="term" value="C:ribonucleoprotein complex"/>
    <property type="evidence" value="ECO:0007669"/>
    <property type="project" value="UniProtKB-KW"/>
</dbReference>
<dbReference type="GO" id="GO:0019013">
    <property type="term" value="C:viral nucleocapsid"/>
    <property type="evidence" value="ECO:0007669"/>
    <property type="project" value="UniProtKB-UniRule"/>
</dbReference>
<dbReference type="GO" id="GO:0003723">
    <property type="term" value="F:RNA binding"/>
    <property type="evidence" value="ECO:0007669"/>
    <property type="project" value="UniProtKB-UniRule"/>
</dbReference>
<dbReference type="GO" id="GO:0005198">
    <property type="term" value="F:structural molecule activity"/>
    <property type="evidence" value="ECO:0007669"/>
    <property type="project" value="UniProtKB-UniRule"/>
</dbReference>
<dbReference type="GO" id="GO:0046718">
    <property type="term" value="P:symbiont entry into host cell"/>
    <property type="evidence" value="ECO:0007669"/>
    <property type="project" value="UniProtKB-KW"/>
</dbReference>
<dbReference type="GO" id="GO:0075732">
    <property type="term" value="P:viral penetration into host nucleus"/>
    <property type="evidence" value="ECO:0007669"/>
    <property type="project" value="UniProtKB-UniRule"/>
</dbReference>
<dbReference type="HAMAP" id="MF_04070">
    <property type="entry name" value="INFV_NCAP"/>
    <property type="match status" value="1"/>
</dbReference>
<dbReference type="InterPro" id="IPR002141">
    <property type="entry name" value="Flu_NP"/>
</dbReference>
<dbReference type="Pfam" id="PF00506">
    <property type="entry name" value="Flu_NP"/>
    <property type="match status" value="1"/>
</dbReference>
<dbReference type="SUPFAM" id="SSF161003">
    <property type="entry name" value="flu NP-like"/>
    <property type="match status" value="1"/>
</dbReference>
<organism>
    <name type="scientific">Influenza A virus (strain A/Swine/Italy/2/1979 H1N1)</name>
    <dbReference type="NCBI Taxonomy" id="383531"/>
    <lineage>
        <taxon>Viruses</taxon>
        <taxon>Riboviria</taxon>
        <taxon>Orthornavirae</taxon>
        <taxon>Negarnaviricota</taxon>
        <taxon>Polyploviricotina</taxon>
        <taxon>Insthoviricetes</taxon>
        <taxon>Articulavirales</taxon>
        <taxon>Orthomyxoviridae</taxon>
        <taxon>Alphainfluenzavirus</taxon>
        <taxon>Alphainfluenzavirus influenzae</taxon>
        <taxon>Influenza A virus</taxon>
    </lineage>
</organism>
<sequence>MASQGTKRSYEQMETGGERQDATEIRASVGRMIGGIGRFYIQMCTELKLSDYEGRLIQNSITIERMVLSAFDERRNKYLEEHPSAGKDPKKTGGPIYRRIDGKWMRELILYDKEEIRRVWRQANNGEDATAGLTHIMIWHSNLNDATYQRTRALVRTGMDPRMCSLMQGSTLPRRSGAAGAAVKGVGTIAMELIRMIKRGINDRNFWRGENGRRTRIAYERMCNILKGKFQTAAQRAMMDQVRESRNPGNAEIEDLIFLARSALILRGSVAHKSCLPACVYGLAVASGHDFEREGYSLVGIDPFKLLQNSQVFSLIRPNENPAHKSQLVWMACHSAAFEDLRVSSFIRGKKVVPRGKLSTRGVQIASNENVEAMDSSTLELRSRYWAIRTRSGGNTNQQKASAGQISVQPTFSVQRNLPFERATVMAAFIGNNEGRTSDMRTEIIRMMESAKPEDLSFQGRGVFELSDEKATNPIVPSFDMNNEGSYFFGDNAEEYDN</sequence>
<feature type="chain" id="PRO_0000079128" description="Nucleoprotein">
    <location>
        <begin position="1"/>
        <end position="498"/>
    </location>
</feature>
<feature type="region of interest" description="Disordered" evidence="2">
    <location>
        <begin position="1"/>
        <end position="22"/>
    </location>
</feature>
<feature type="short sequence motif" description="Unconventional nuclear localization signal" evidence="1">
    <location>
        <begin position="1"/>
        <end position="18"/>
    </location>
</feature>
<feature type="short sequence motif" description="Bipartite nuclear localization signal" evidence="1">
    <location>
        <begin position="198"/>
        <end position="216"/>
    </location>
</feature>
<feature type="compositionally biased region" description="Basic and acidic residues" evidence="2">
    <location>
        <begin position="8"/>
        <end position="22"/>
    </location>
</feature>
<gene>
    <name evidence="1" type="primary">NP</name>
</gene>
<organismHost>
    <name type="scientific">Aves</name>
    <dbReference type="NCBI Taxonomy" id="8782"/>
</organismHost>
<organismHost>
    <name type="scientific">Homo sapiens</name>
    <name type="common">Human</name>
    <dbReference type="NCBI Taxonomy" id="9606"/>
</organismHost>
<organismHost>
    <name type="scientific">Sus scrofa</name>
    <name type="common">Pig</name>
    <dbReference type="NCBI Taxonomy" id="9823"/>
</organismHost>
<name>NCAP_I79A5</name>
<protein>
    <recommendedName>
        <fullName evidence="1">Nucleoprotein</fullName>
    </recommendedName>
    <alternativeName>
        <fullName evidence="1">Nucleocapsid protein</fullName>
        <shortName evidence="1">Protein N</shortName>
    </alternativeName>
</protein>
<proteinExistence type="inferred from homology"/>
<reference key="1">
    <citation type="journal article" date="1991" name="J. Virol.">
        <title>Evolution of influenza A virus nucleoprotein genes: implications for the origins of H1N1 human and classical swine viruses.</title>
        <authorList>
            <person name="Gorman O.T."/>
            <person name="Bean W.J."/>
            <person name="Kawaoka Y."/>
            <person name="Donatelli I."/>
            <person name="Guo Y."/>
            <person name="Webster R.G."/>
        </authorList>
    </citation>
    <scope>NUCLEOTIDE SEQUENCE [GENOMIC RNA]</scope>
</reference>
<comment type="function">
    <text evidence="1">Encapsidates the negative strand viral RNA, protecting it from nucleases. The encapsidated genomic RNA is termed the ribonucleoprotein (RNP) and serves as template for transcription and replication. The RNP needs to be localized in the host nucleus to start an infectious cycle, but is too large to diffuse through the nuclear pore complex. NP comprises at least 2 nuclear localization signals that are responsible for the active RNP import into the nucleus through cellular importin alpha/beta pathway. Later in the infection, nclear export of RNPs are mediated through viral proteins NEP interacting with M1 which binds nucleoproteins. It is possible that nucleoprotein binds directly host exportin-1/XPO1 and plays an active role in RNPs nuclear export. M1 interaction with RNP seems to hide nucleoprotein's nuclear localization signals. Soon after a virion infects a new cell, M1 dissociates from the RNP under acidification of the virion driven by M2 protein. Dissociation of M1 from RNP unmasks nucleoprotein's nuclear localization signals, targeting the RNP to the nucleus.</text>
</comment>
<comment type="subunit">
    <text evidence="1">Homomultimerizes to form the nucleocapsid. May bind host exportin-1/XPO1. Binds to viral genomic RNA. Protein-RNA contacts are mediated by a combination of electrostatic interactions between positively charged residues and the phosphate backbone and planar interactions between aromatic side chains and bases.</text>
</comment>
<comment type="subcellular location">
    <subcellularLocation>
        <location evidence="1">Virion</location>
    </subcellularLocation>
    <subcellularLocation>
        <location evidence="1">Host nucleus</location>
    </subcellularLocation>
</comment>
<comment type="PTM">
    <text evidence="1">Late in virus-infected cells, may be cleaved from a 56-kDa protein to a 53-kDa protein by a cellular caspase. This cleavage might be a marker for the onset of apoptosis in infected cells or have a specific function in virus host interaction.</text>
</comment>
<comment type="similarity">
    <text evidence="1">Belongs to the influenza viruses nucleoprotein family.</text>
</comment>
<keyword id="KW-0167">Capsid protein</keyword>
<keyword id="KW-1139">Helical capsid protein</keyword>
<keyword id="KW-1048">Host nucleus</keyword>
<keyword id="KW-0945">Host-virus interaction</keyword>
<keyword id="KW-0687">Ribonucleoprotein</keyword>
<keyword id="KW-0694">RNA-binding</keyword>
<keyword id="KW-0543">Viral nucleoprotein</keyword>
<keyword id="KW-1163">Viral penetration into host nucleus</keyword>
<keyword id="KW-0946">Virion</keyword>
<keyword id="KW-1160">Virus entry into host cell</keyword>